<comment type="function">
    <text evidence="1">May act as a double-stranded DNA (dsDNA) mimic. Probably regulates the activity of a dsDNA-binding protein.</text>
</comment>
<comment type="similarity">
    <text evidence="1">Belongs to the putative dsDNA mimic protein family.</text>
</comment>
<comment type="sequence caution" evidence="2">
    <conflict type="erroneous initiation">
        <sequence resource="EMBL-CDS" id="AAN80179"/>
    </conflict>
</comment>
<keyword id="KW-1185">Reference proteome</keyword>
<feature type="chain" id="PRO_0000072777" description="Putative double-stranded DNA mimic protein YciU">
    <location>
        <begin position="1"/>
        <end position="109"/>
    </location>
</feature>
<proteinExistence type="inferred from homology"/>
<dbReference type="EMBL" id="AE014075">
    <property type="protein sequence ID" value="AAN80179.1"/>
    <property type="status" value="ALT_INIT"/>
    <property type="molecule type" value="Genomic_DNA"/>
</dbReference>
<dbReference type="RefSeq" id="WP_000366959.1">
    <property type="nucleotide sequence ID" value="NZ_CP051263.1"/>
</dbReference>
<dbReference type="SMR" id="P0A8L8"/>
<dbReference type="STRING" id="199310.c1712"/>
<dbReference type="KEGG" id="ecc:c1712"/>
<dbReference type="eggNOG" id="COG3099">
    <property type="taxonomic scope" value="Bacteria"/>
</dbReference>
<dbReference type="HOGENOM" id="CLU_143392_0_0_6"/>
<dbReference type="Proteomes" id="UP000001410">
    <property type="component" value="Chromosome"/>
</dbReference>
<dbReference type="Gene3D" id="3.10.450.140">
    <property type="entry name" value="dsDNA mimic, putative"/>
    <property type="match status" value="1"/>
</dbReference>
<dbReference type="HAMAP" id="MF_00680">
    <property type="entry name" value="Put_dsDNA_mimic"/>
    <property type="match status" value="1"/>
</dbReference>
<dbReference type="InterPro" id="IPR007376">
    <property type="entry name" value="dsDNA_mimic_put"/>
</dbReference>
<dbReference type="InterPro" id="IPR036763">
    <property type="entry name" value="Put_dsDNA_mimic_sf"/>
</dbReference>
<dbReference type="NCBIfam" id="NF003469">
    <property type="entry name" value="PRK05094.1"/>
    <property type="match status" value="1"/>
</dbReference>
<dbReference type="Pfam" id="PF04269">
    <property type="entry name" value="DUF440"/>
    <property type="match status" value="1"/>
</dbReference>
<dbReference type="PIRSF" id="PIRSF004916">
    <property type="entry name" value="UCP004916"/>
    <property type="match status" value="1"/>
</dbReference>
<dbReference type="SUPFAM" id="SSF102816">
    <property type="entry name" value="Putative dsDNA mimic"/>
    <property type="match status" value="1"/>
</dbReference>
<gene>
    <name evidence="1" type="primary">yciU</name>
    <name type="ordered locus">c1712</name>
</gene>
<evidence type="ECO:0000255" key="1">
    <source>
        <dbReference type="HAMAP-Rule" id="MF_00680"/>
    </source>
</evidence>
<evidence type="ECO:0000305" key="2"/>
<sequence>MDMDLNNRLTEDETLEQAYDIFLELAADNLDPADVLLFNLQFEERGGAELFDPAEDWQEHVDFDLNPDFFAEVVIGLADSEDGEINDVFARILLCREKDHKLCHIIWRE</sequence>
<name>YCIU_ECOL6</name>
<accession>P0A8L8</accession>
<accession>P76028</accession>
<accession>P76830</accession>
<accession>Q8XCC8</accession>
<protein>
    <recommendedName>
        <fullName evidence="1">Putative double-stranded DNA mimic protein YciU</fullName>
    </recommendedName>
</protein>
<organism>
    <name type="scientific">Escherichia coli O6:H1 (strain CFT073 / ATCC 700928 / UPEC)</name>
    <dbReference type="NCBI Taxonomy" id="199310"/>
    <lineage>
        <taxon>Bacteria</taxon>
        <taxon>Pseudomonadati</taxon>
        <taxon>Pseudomonadota</taxon>
        <taxon>Gammaproteobacteria</taxon>
        <taxon>Enterobacterales</taxon>
        <taxon>Enterobacteriaceae</taxon>
        <taxon>Escherichia</taxon>
    </lineage>
</organism>
<reference key="1">
    <citation type="journal article" date="2002" name="Proc. Natl. Acad. Sci. U.S.A.">
        <title>Extensive mosaic structure revealed by the complete genome sequence of uropathogenic Escherichia coli.</title>
        <authorList>
            <person name="Welch R.A."/>
            <person name="Burland V."/>
            <person name="Plunkett G. III"/>
            <person name="Redford P."/>
            <person name="Roesch P."/>
            <person name="Rasko D."/>
            <person name="Buckles E.L."/>
            <person name="Liou S.-R."/>
            <person name="Boutin A."/>
            <person name="Hackett J."/>
            <person name="Stroud D."/>
            <person name="Mayhew G.F."/>
            <person name="Rose D.J."/>
            <person name="Zhou S."/>
            <person name="Schwartz D.C."/>
            <person name="Perna N.T."/>
            <person name="Mobley H.L.T."/>
            <person name="Donnenberg M.S."/>
            <person name="Blattner F.R."/>
        </authorList>
    </citation>
    <scope>NUCLEOTIDE SEQUENCE [LARGE SCALE GENOMIC DNA]</scope>
    <source>
        <strain>CFT073 / ATCC 700928 / UPEC</strain>
    </source>
</reference>